<proteinExistence type="predicted"/>
<reference key="1">
    <citation type="journal article" date="1997" name="Nature">
        <title>The complete genome sequence of the hyperthermophilic, sulphate-reducing archaeon Archaeoglobus fulgidus.</title>
        <authorList>
            <person name="Klenk H.-P."/>
            <person name="Clayton R.A."/>
            <person name="Tomb J.-F."/>
            <person name="White O."/>
            <person name="Nelson K.E."/>
            <person name="Ketchum K.A."/>
            <person name="Dodson R.J."/>
            <person name="Gwinn M.L."/>
            <person name="Hickey E.K."/>
            <person name="Peterson J.D."/>
            <person name="Richardson D.L."/>
            <person name="Kerlavage A.R."/>
            <person name="Graham D.E."/>
            <person name="Kyrpides N.C."/>
            <person name="Fleischmann R.D."/>
            <person name="Quackenbush J."/>
            <person name="Lee N.H."/>
            <person name="Sutton G.G."/>
            <person name="Gill S.R."/>
            <person name="Kirkness E.F."/>
            <person name="Dougherty B.A."/>
            <person name="McKenney K."/>
            <person name="Adams M.D."/>
            <person name="Loftus B.J."/>
            <person name="Peterson S.N."/>
            <person name="Reich C.I."/>
            <person name="McNeil L.K."/>
            <person name="Badger J.H."/>
            <person name="Glodek A."/>
            <person name="Zhou L."/>
            <person name="Overbeek R."/>
            <person name="Gocayne J.D."/>
            <person name="Weidman J.F."/>
            <person name="McDonald L.A."/>
            <person name="Utterback T.R."/>
            <person name="Cotton M.D."/>
            <person name="Spriggs T."/>
            <person name="Artiach P."/>
            <person name="Kaine B.P."/>
            <person name="Sykes S.M."/>
            <person name="Sadow P.W."/>
            <person name="D'Andrea K.P."/>
            <person name="Bowman C."/>
            <person name="Fujii C."/>
            <person name="Garland S.A."/>
            <person name="Mason T.M."/>
            <person name="Olsen G.J."/>
            <person name="Fraser C.M."/>
            <person name="Smith H.O."/>
            <person name="Woese C.R."/>
            <person name="Venter J.C."/>
        </authorList>
    </citation>
    <scope>NUCLEOTIDE SEQUENCE [LARGE SCALE GENOMIC DNA]</scope>
    <source>
        <strain>ATCC 49558 / DSM 4304 / JCM 9628 / NBRC 100126 / VC-16</strain>
    </source>
</reference>
<comment type="subcellular location">
    <subcellularLocation>
        <location evidence="2">Cell membrane</location>
        <topology evidence="2">Multi-pass membrane protein</topology>
    </subcellularLocation>
</comment>
<keyword id="KW-1003">Cell membrane</keyword>
<keyword id="KW-0472">Membrane</keyword>
<keyword id="KW-1185">Reference proteome</keyword>
<keyword id="KW-0812">Transmembrane</keyword>
<keyword id="KW-1133">Transmembrane helix</keyword>
<organism>
    <name type="scientific">Archaeoglobus fulgidus (strain ATCC 49558 / DSM 4304 / JCM 9628 / NBRC 100126 / VC-16)</name>
    <dbReference type="NCBI Taxonomy" id="224325"/>
    <lineage>
        <taxon>Archaea</taxon>
        <taxon>Methanobacteriati</taxon>
        <taxon>Methanobacteriota</taxon>
        <taxon>Archaeoglobi</taxon>
        <taxon>Archaeoglobales</taxon>
        <taxon>Archaeoglobaceae</taxon>
        <taxon>Archaeoglobus</taxon>
    </lineage>
</organism>
<accession>O28149</accession>
<protein>
    <recommendedName>
        <fullName>Uncharacterized protein AF_2131</fullName>
    </recommendedName>
</protein>
<dbReference type="EMBL" id="AE000782">
    <property type="protein sequence ID" value="AAB89128.1"/>
    <property type="molecule type" value="Genomic_DNA"/>
</dbReference>
<dbReference type="PIR" id="C69516">
    <property type="entry name" value="C69516"/>
</dbReference>
<dbReference type="RefSeq" id="WP_010879622.1">
    <property type="nucleotide sequence ID" value="NC_000917.1"/>
</dbReference>
<dbReference type="PaxDb" id="224325-AF_2131"/>
<dbReference type="DNASU" id="1485360"/>
<dbReference type="EnsemblBacteria" id="AAB89128">
    <property type="protein sequence ID" value="AAB89128"/>
    <property type="gene ID" value="AF_2131"/>
</dbReference>
<dbReference type="KEGG" id="afu:AF_2131"/>
<dbReference type="HOGENOM" id="CLU_843591_0_0_2"/>
<dbReference type="Proteomes" id="UP000002199">
    <property type="component" value="Chromosome"/>
</dbReference>
<dbReference type="GO" id="GO:0005886">
    <property type="term" value="C:plasma membrane"/>
    <property type="evidence" value="ECO:0007669"/>
    <property type="project" value="UniProtKB-SubCell"/>
</dbReference>
<feature type="chain" id="PRO_0000128098" description="Uncharacterized protein AF_2131">
    <location>
        <begin position="1"/>
        <end position="329"/>
    </location>
</feature>
<feature type="transmembrane region" description="Helical" evidence="1">
    <location>
        <begin position="5"/>
        <end position="24"/>
    </location>
</feature>
<feature type="transmembrane region" description="Helical" evidence="1">
    <location>
        <begin position="34"/>
        <end position="56"/>
    </location>
</feature>
<feature type="transmembrane region" description="Helical" evidence="1">
    <location>
        <begin position="92"/>
        <end position="114"/>
    </location>
</feature>
<feature type="transmembrane region" description="Helical" evidence="1">
    <location>
        <begin position="124"/>
        <end position="146"/>
    </location>
</feature>
<feature type="transmembrane region" description="Helical" evidence="1">
    <location>
        <begin position="159"/>
        <end position="181"/>
    </location>
</feature>
<feature type="transmembrane region" description="Helical" evidence="1">
    <location>
        <begin position="196"/>
        <end position="218"/>
    </location>
</feature>
<feature type="transmembrane region" description="Helical" evidence="1">
    <location>
        <begin position="231"/>
        <end position="253"/>
    </location>
</feature>
<feature type="transmembrane region" description="Helical" evidence="1">
    <location>
        <begin position="263"/>
        <end position="285"/>
    </location>
</feature>
<feature type="transmembrane region" description="Helical" evidence="1">
    <location>
        <begin position="306"/>
        <end position="328"/>
    </location>
</feature>
<evidence type="ECO:0000255" key="1"/>
<evidence type="ECO:0000305" key="2"/>
<gene>
    <name type="ordered locus">AF_2131</name>
</gene>
<sequence length="329" mass="37067">MWKRNLLLLILLHIGAFLFPFLTVSKEKLTPERIAVALALLAVVLMSEALSIYLIFKRRGLRLREGLIWILELKEIEYAKLSEEERDLAVKFGYIIIGFPAAGLMLCGAVLEWGDLALAFKFPIIFFAFIVPLLQLCLFPLVVLFYTYNRFLKNDLAASANFSVFWAKLSIAGLVLVLLSLMLVKSEVLPFVKTITAHRTAFILAPLFNIFVGALQYLMAKTGSRELMVTFSIVLFASPLLSFALLLELLGAYSLQESLKFALIGVSVIFLAMFAATWVVLRLFGYSFDTLQRAVEEARVEGPILFWLFWVNAAIVGIGIFFVIRILTF</sequence>
<name>Y2131_ARCFU</name>